<organism>
    <name type="scientific">Levilactobacillus brevis (strain ATCC 367 / BCRC 12310 / CIP 105137 / JCM 1170 / LMG 11437 / NCIMB 947 / NCTC 947)</name>
    <name type="common">Lactobacillus brevis</name>
    <dbReference type="NCBI Taxonomy" id="387344"/>
    <lineage>
        <taxon>Bacteria</taxon>
        <taxon>Bacillati</taxon>
        <taxon>Bacillota</taxon>
        <taxon>Bacilli</taxon>
        <taxon>Lactobacillales</taxon>
        <taxon>Lactobacillaceae</taxon>
        <taxon>Levilactobacillus</taxon>
    </lineage>
</organism>
<reference key="1">
    <citation type="journal article" date="2006" name="Proc. Natl. Acad. Sci. U.S.A.">
        <title>Comparative genomics of the lactic acid bacteria.</title>
        <authorList>
            <person name="Makarova K.S."/>
            <person name="Slesarev A."/>
            <person name="Wolf Y.I."/>
            <person name="Sorokin A."/>
            <person name="Mirkin B."/>
            <person name="Koonin E.V."/>
            <person name="Pavlov A."/>
            <person name="Pavlova N."/>
            <person name="Karamychev V."/>
            <person name="Polouchine N."/>
            <person name="Shakhova V."/>
            <person name="Grigoriev I."/>
            <person name="Lou Y."/>
            <person name="Rohksar D."/>
            <person name="Lucas S."/>
            <person name="Huang K."/>
            <person name="Goodstein D.M."/>
            <person name="Hawkins T."/>
            <person name="Plengvidhya V."/>
            <person name="Welker D."/>
            <person name="Hughes J."/>
            <person name="Goh Y."/>
            <person name="Benson A."/>
            <person name="Baldwin K."/>
            <person name="Lee J.-H."/>
            <person name="Diaz-Muniz I."/>
            <person name="Dosti B."/>
            <person name="Smeianov V."/>
            <person name="Wechter W."/>
            <person name="Barabote R."/>
            <person name="Lorca G."/>
            <person name="Altermann E."/>
            <person name="Barrangou R."/>
            <person name="Ganesan B."/>
            <person name="Xie Y."/>
            <person name="Rawsthorne H."/>
            <person name="Tamir D."/>
            <person name="Parker C."/>
            <person name="Breidt F."/>
            <person name="Broadbent J.R."/>
            <person name="Hutkins R."/>
            <person name="O'Sullivan D."/>
            <person name="Steele J."/>
            <person name="Unlu G."/>
            <person name="Saier M.H. Jr."/>
            <person name="Klaenhammer T."/>
            <person name="Richardson P."/>
            <person name="Kozyavkin S."/>
            <person name="Weimer B.C."/>
            <person name="Mills D.A."/>
        </authorList>
    </citation>
    <scope>NUCLEOTIDE SEQUENCE [LARGE SCALE GENOMIC DNA]</scope>
    <source>
        <strain>ATCC 367 / BCRC 12310 / CIP 105137 / JCM 1170 / LMG 11437 / NCIMB 947 / NCTC 947</strain>
    </source>
</reference>
<comment type="catalytic activity">
    <reaction evidence="1">
        <text>(2R)-3-phosphoglycerate + ATP = (2R)-3-phospho-glyceroyl phosphate + ADP</text>
        <dbReference type="Rhea" id="RHEA:14801"/>
        <dbReference type="ChEBI" id="CHEBI:30616"/>
        <dbReference type="ChEBI" id="CHEBI:57604"/>
        <dbReference type="ChEBI" id="CHEBI:58272"/>
        <dbReference type="ChEBI" id="CHEBI:456216"/>
        <dbReference type="EC" id="2.7.2.3"/>
    </reaction>
</comment>
<comment type="pathway">
    <text evidence="1">Carbohydrate degradation; glycolysis; pyruvate from D-glyceraldehyde 3-phosphate: step 2/5.</text>
</comment>
<comment type="subunit">
    <text evidence="1">Monomer.</text>
</comment>
<comment type="subcellular location">
    <subcellularLocation>
        <location evidence="1">Cytoplasm</location>
    </subcellularLocation>
</comment>
<comment type="similarity">
    <text evidence="1">Belongs to the phosphoglycerate kinase family.</text>
</comment>
<feature type="chain" id="PRO_1000009618" description="Phosphoglycerate kinase">
    <location>
        <begin position="1"/>
        <end position="400"/>
    </location>
</feature>
<feature type="binding site" evidence="1">
    <location>
        <begin position="21"/>
        <end position="23"/>
    </location>
    <ligand>
        <name>substrate</name>
    </ligand>
</feature>
<feature type="binding site" evidence="1">
    <location>
        <position position="36"/>
    </location>
    <ligand>
        <name>substrate</name>
    </ligand>
</feature>
<feature type="binding site" evidence="1">
    <location>
        <begin position="59"/>
        <end position="62"/>
    </location>
    <ligand>
        <name>substrate</name>
    </ligand>
</feature>
<feature type="binding site" evidence="1">
    <location>
        <position position="119"/>
    </location>
    <ligand>
        <name>substrate</name>
    </ligand>
</feature>
<feature type="binding site" evidence="1">
    <location>
        <position position="160"/>
    </location>
    <ligand>
        <name>substrate</name>
    </ligand>
</feature>
<feature type="binding site" evidence="1">
    <location>
        <position position="211"/>
    </location>
    <ligand>
        <name>ATP</name>
        <dbReference type="ChEBI" id="CHEBI:30616"/>
    </ligand>
</feature>
<feature type="binding site" evidence="1">
    <location>
        <position position="329"/>
    </location>
    <ligand>
        <name>ATP</name>
        <dbReference type="ChEBI" id="CHEBI:30616"/>
    </ligand>
</feature>
<feature type="binding site" evidence="1">
    <location>
        <begin position="356"/>
        <end position="359"/>
    </location>
    <ligand>
        <name>ATP</name>
        <dbReference type="ChEBI" id="CHEBI:30616"/>
    </ligand>
</feature>
<protein>
    <recommendedName>
        <fullName evidence="1">Phosphoglycerate kinase</fullName>
        <ecNumber evidence="1">2.7.2.3</ecNumber>
    </recommendedName>
</protein>
<proteinExistence type="inferred from homology"/>
<gene>
    <name evidence="1" type="primary">pgk</name>
    <name type="ordered locus">LVIS_0662</name>
</gene>
<keyword id="KW-0067">ATP-binding</keyword>
<keyword id="KW-0963">Cytoplasm</keyword>
<keyword id="KW-0324">Glycolysis</keyword>
<keyword id="KW-0418">Kinase</keyword>
<keyword id="KW-0547">Nucleotide-binding</keyword>
<keyword id="KW-1185">Reference proteome</keyword>
<keyword id="KW-0808">Transferase</keyword>
<dbReference type="EC" id="2.7.2.3" evidence="1"/>
<dbReference type="EMBL" id="CP000416">
    <property type="protein sequence ID" value="ABJ63805.1"/>
    <property type="molecule type" value="Genomic_DNA"/>
</dbReference>
<dbReference type="RefSeq" id="WP_011667437.1">
    <property type="nucleotide sequence ID" value="NC_008497.1"/>
</dbReference>
<dbReference type="SMR" id="Q03SL7"/>
<dbReference type="STRING" id="387344.LVIS_0662"/>
<dbReference type="KEGG" id="lbr:LVIS_0662"/>
<dbReference type="eggNOG" id="COG0126">
    <property type="taxonomic scope" value="Bacteria"/>
</dbReference>
<dbReference type="HOGENOM" id="CLU_025427_0_2_9"/>
<dbReference type="UniPathway" id="UPA00109">
    <property type="reaction ID" value="UER00185"/>
</dbReference>
<dbReference type="Proteomes" id="UP000001652">
    <property type="component" value="Chromosome"/>
</dbReference>
<dbReference type="GO" id="GO:0005829">
    <property type="term" value="C:cytosol"/>
    <property type="evidence" value="ECO:0007669"/>
    <property type="project" value="TreeGrafter"/>
</dbReference>
<dbReference type="GO" id="GO:0043531">
    <property type="term" value="F:ADP binding"/>
    <property type="evidence" value="ECO:0007669"/>
    <property type="project" value="TreeGrafter"/>
</dbReference>
<dbReference type="GO" id="GO:0005524">
    <property type="term" value="F:ATP binding"/>
    <property type="evidence" value="ECO:0007669"/>
    <property type="project" value="UniProtKB-KW"/>
</dbReference>
<dbReference type="GO" id="GO:0004618">
    <property type="term" value="F:phosphoglycerate kinase activity"/>
    <property type="evidence" value="ECO:0007669"/>
    <property type="project" value="UniProtKB-UniRule"/>
</dbReference>
<dbReference type="GO" id="GO:0006094">
    <property type="term" value="P:gluconeogenesis"/>
    <property type="evidence" value="ECO:0007669"/>
    <property type="project" value="TreeGrafter"/>
</dbReference>
<dbReference type="GO" id="GO:0006096">
    <property type="term" value="P:glycolytic process"/>
    <property type="evidence" value="ECO:0007669"/>
    <property type="project" value="UniProtKB-UniRule"/>
</dbReference>
<dbReference type="CDD" id="cd00318">
    <property type="entry name" value="Phosphoglycerate_kinase"/>
    <property type="match status" value="1"/>
</dbReference>
<dbReference type="FunFam" id="3.40.50.1260:FF:000001">
    <property type="entry name" value="Phosphoglycerate kinase"/>
    <property type="match status" value="1"/>
</dbReference>
<dbReference type="FunFam" id="3.40.50.1260:FF:000008">
    <property type="entry name" value="Phosphoglycerate kinase"/>
    <property type="match status" value="1"/>
</dbReference>
<dbReference type="Gene3D" id="3.40.50.1260">
    <property type="entry name" value="Phosphoglycerate kinase, N-terminal domain"/>
    <property type="match status" value="2"/>
</dbReference>
<dbReference type="HAMAP" id="MF_00145">
    <property type="entry name" value="Phosphoglyc_kinase"/>
    <property type="match status" value="1"/>
</dbReference>
<dbReference type="InterPro" id="IPR001576">
    <property type="entry name" value="Phosphoglycerate_kinase"/>
</dbReference>
<dbReference type="InterPro" id="IPR015911">
    <property type="entry name" value="Phosphoglycerate_kinase_CS"/>
</dbReference>
<dbReference type="InterPro" id="IPR015824">
    <property type="entry name" value="Phosphoglycerate_kinase_N"/>
</dbReference>
<dbReference type="InterPro" id="IPR036043">
    <property type="entry name" value="Phosphoglycerate_kinase_sf"/>
</dbReference>
<dbReference type="PANTHER" id="PTHR11406">
    <property type="entry name" value="PHOSPHOGLYCERATE KINASE"/>
    <property type="match status" value="1"/>
</dbReference>
<dbReference type="PANTHER" id="PTHR11406:SF23">
    <property type="entry name" value="PHOSPHOGLYCERATE KINASE 1, CHLOROPLASTIC-RELATED"/>
    <property type="match status" value="1"/>
</dbReference>
<dbReference type="Pfam" id="PF00162">
    <property type="entry name" value="PGK"/>
    <property type="match status" value="1"/>
</dbReference>
<dbReference type="PIRSF" id="PIRSF000724">
    <property type="entry name" value="Pgk"/>
    <property type="match status" value="1"/>
</dbReference>
<dbReference type="PRINTS" id="PR00477">
    <property type="entry name" value="PHGLYCKINASE"/>
</dbReference>
<dbReference type="SUPFAM" id="SSF53748">
    <property type="entry name" value="Phosphoglycerate kinase"/>
    <property type="match status" value="1"/>
</dbReference>
<dbReference type="PROSITE" id="PS00111">
    <property type="entry name" value="PGLYCERATE_KINASE"/>
    <property type="match status" value="1"/>
</dbReference>
<evidence type="ECO:0000255" key="1">
    <source>
        <dbReference type="HAMAP-Rule" id="MF_00145"/>
    </source>
</evidence>
<sequence>MAKLTVSDLDLKGKKVLMRVDFNVPIKDGVIGNDNRIVAALPTIKYVIEHGGKAILLSHLGRIKKEEDKPGLSMRPVAERLSNLLNKPVTFVPTTEGKQLEDAIDGLNDGDVLVMENTRYEDVKDGENVKRESGNDPELGKYWASLGDVFVNDAFGTAHRSHASNVGIASNMSQTAAGFLMEKEITFIGGAVDNPEHPFVAILGGAKVSDKIGVIDNLLAKADKILIGGGMTYTFYAAKGMKIGNSLVETDKIDLAKEILDKAGDKLVLPVDSVVAEKFDNDAPHKTVEGDVPDGYMALDIGPKSVAEFKDVLKDAKTVVWNGPMGVFEMSNYAEGTLEIGKFLGTLTNAKTIVGGGDSTAAVQQLGVADKLSHISTGGGASLEYLEGKTLPGIAAISDK</sequence>
<name>PGK_LEVBA</name>
<accession>Q03SL7</accession>